<sequence>MTNSNRIKLTWISFLSYALTGALVIVTGMVMGNIADYFHLPVSSMSNTFTFLNAGILISIFLNAWLMEIIPLKTQLRFGFILMVLAVAGLMFGHSLALFSAAMFVLGLVSGITMSIGTFLITQLYEGRQRGSRLLFTDSFFSMAGMIFPMVAAFLLARSIEWYWVYACIGLVYLAIFILTFGCEFPALGKHAQHSQAPVVKEKWGIGVLFLAVAALCYILGQLGFISWVPEYAKGLGMSLNDAGALVSDFWMSYMFGMWAFSFILRFFDLQRILTVLAGMAAVLMYLFITGTQAHMPWFILTLGFFSSAIYTSIITLGSQQTKVASPKLVNFILTCGTIGTMLTFVVTGPIVAHSGPQAALLTANGLYAVVFVMCFALGFVSRHRQHSAPATH</sequence>
<organism>
    <name type="scientific">Salmonella paratyphi C (strain RKS4594)</name>
    <dbReference type="NCBI Taxonomy" id="476213"/>
    <lineage>
        <taxon>Bacteria</taxon>
        <taxon>Pseudomonadati</taxon>
        <taxon>Pseudomonadota</taxon>
        <taxon>Gammaproteobacteria</taxon>
        <taxon>Enterobacterales</taxon>
        <taxon>Enterobacteriaceae</taxon>
        <taxon>Salmonella</taxon>
    </lineage>
</organism>
<proteinExistence type="inferred from homology"/>
<reference key="1">
    <citation type="journal article" date="2009" name="PLoS ONE">
        <title>Salmonella paratyphi C: genetic divergence from Salmonella choleraesuis and pathogenic convergence with Salmonella typhi.</title>
        <authorList>
            <person name="Liu W.-Q."/>
            <person name="Feng Y."/>
            <person name="Wang Y."/>
            <person name="Zou Q.-H."/>
            <person name="Chen F."/>
            <person name="Guo J.-T."/>
            <person name="Peng Y.-H."/>
            <person name="Jin Y."/>
            <person name="Li Y.-G."/>
            <person name="Hu S.-N."/>
            <person name="Johnston R.N."/>
            <person name="Liu G.-R."/>
            <person name="Liu S.-L."/>
        </authorList>
    </citation>
    <scope>NUCLEOTIDE SEQUENCE [LARGE SCALE GENOMIC DNA]</scope>
    <source>
        <strain>RKS4594</strain>
    </source>
</reference>
<protein>
    <recommendedName>
        <fullName evidence="1">Protein TsgA</fullName>
    </recommendedName>
</protein>
<feature type="chain" id="PRO_1000149598" description="Protein TsgA">
    <location>
        <begin position="1"/>
        <end position="393"/>
    </location>
</feature>
<feature type="transmembrane region" description="Helical" evidence="1">
    <location>
        <begin position="11"/>
        <end position="31"/>
    </location>
</feature>
<feature type="transmembrane region" description="Helical" evidence="1">
    <location>
        <begin position="51"/>
        <end position="71"/>
    </location>
</feature>
<feature type="transmembrane region" description="Helical" evidence="1">
    <location>
        <begin position="78"/>
        <end position="98"/>
    </location>
</feature>
<feature type="transmembrane region" description="Helical" evidence="1">
    <location>
        <begin position="101"/>
        <end position="121"/>
    </location>
</feature>
<feature type="transmembrane region" description="Helical" evidence="1">
    <location>
        <begin position="134"/>
        <end position="154"/>
    </location>
</feature>
<feature type="transmembrane region" description="Helical" evidence="1">
    <location>
        <begin position="162"/>
        <end position="182"/>
    </location>
</feature>
<feature type="transmembrane region" description="Helical" evidence="1">
    <location>
        <begin position="206"/>
        <end position="226"/>
    </location>
</feature>
<feature type="transmembrane region" description="Helical" evidence="1">
    <location>
        <begin position="245"/>
        <end position="265"/>
    </location>
</feature>
<feature type="transmembrane region" description="Helical" evidence="1">
    <location>
        <begin position="273"/>
        <end position="293"/>
    </location>
</feature>
<feature type="transmembrane region" description="Helical" evidence="1">
    <location>
        <begin position="298"/>
        <end position="318"/>
    </location>
</feature>
<feature type="transmembrane region" description="Helical" evidence="1">
    <location>
        <begin position="332"/>
        <end position="352"/>
    </location>
</feature>
<feature type="transmembrane region" description="Helical" evidence="1">
    <location>
        <begin position="361"/>
        <end position="381"/>
    </location>
</feature>
<dbReference type="EMBL" id="CP000857">
    <property type="protein sequence ID" value="ACN47625.1"/>
    <property type="molecule type" value="Genomic_DNA"/>
</dbReference>
<dbReference type="RefSeq" id="WP_000185211.1">
    <property type="nucleotide sequence ID" value="NC_012125.1"/>
</dbReference>
<dbReference type="SMR" id="C0Q0E8"/>
<dbReference type="KEGG" id="sei:SPC_3542"/>
<dbReference type="HOGENOM" id="CLU_056916_0_0_6"/>
<dbReference type="Proteomes" id="UP000001599">
    <property type="component" value="Chromosome"/>
</dbReference>
<dbReference type="GO" id="GO:0005886">
    <property type="term" value="C:plasma membrane"/>
    <property type="evidence" value="ECO:0007669"/>
    <property type="project" value="UniProtKB-SubCell"/>
</dbReference>
<dbReference type="GO" id="GO:0022857">
    <property type="term" value="F:transmembrane transporter activity"/>
    <property type="evidence" value="ECO:0007669"/>
    <property type="project" value="InterPro"/>
</dbReference>
<dbReference type="FunFam" id="1.20.1250.20:FF:000032">
    <property type="entry name" value="Protein TsgA"/>
    <property type="match status" value="1"/>
</dbReference>
<dbReference type="FunFam" id="1.20.1250.20:FF:000052">
    <property type="entry name" value="Protein TsgA"/>
    <property type="match status" value="1"/>
</dbReference>
<dbReference type="Gene3D" id="1.20.1250.20">
    <property type="entry name" value="MFS general substrate transporter like domains"/>
    <property type="match status" value="2"/>
</dbReference>
<dbReference type="HAMAP" id="MF_01044">
    <property type="entry name" value="MFS_TsgA"/>
    <property type="match status" value="1"/>
</dbReference>
<dbReference type="InterPro" id="IPR011701">
    <property type="entry name" value="MFS"/>
</dbReference>
<dbReference type="InterPro" id="IPR020846">
    <property type="entry name" value="MFS_dom"/>
</dbReference>
<dbReference type="InterPro" id="IPR036259">
    <property type="entry name" value="MFS_trans_sf"/>
</dbReference>
<dbReference type="InterPro" id="IPR023528">
    <property type="entry name" value="MFS_TsgA"/>
</dbReference>
<dbReference type="InterPro" id="IPR050375">
    <property type="entry name" value="MFS_TsgA-like"/>
</dbReference>
<dbReference type="NCBIfam" id="NF002982">
    <property type="entry name" value="PRK03699.1"/>
    <property type="match status" value="1"/>
</dbReference>
<dbReference type="PANTHER" id="PTHR43702">
    <property type="entry name" value="L-FUCOSE-PROTON SYMPORTER"/>
    <property type="match status" value="1"/>
</dbReference>
<dbReference type="PANTHER" id="PTHR43702:SF3">
    <property type="entry name" value="PROTEIN TSGA"/>
    <property type="match status" value="1"/>
</dbReference>
<dbReference type="Pfam" id="PF07690">
    <property type="entry name" value="MFS_1"/>
    <property type="match status" value="1"/>
</dbReference>
<dbReference type="SUPFAM" id="SSF103473">
    <property type="entry name" value="MFS general substrate transporter"/>
    <property type="match status" value="1"/>
</dbReference>
<dbReference type="PROSITE" id="PS50850">
    <property type="entry name" value="MFS"/>
    <property type="match status" value="1"/>
</dbReference>
<gene>
    <name evidence="1" type="primary">tsgA</name>
    <name type="ordered locus">SPC_3542</name>
</gene>
<name>TSGA_SALPC</name>
<accession>C0Q0E8</accession>
<evidence type="ECO:0000255" key="1">
    <source>
        <dbReference type="HAMAP-Rule" id="MF_01044"/>
    </source>
</evidence>
<comment type="subcellular location">
    <subcellularLocation>
        <location evidence="1">Cell inner membrane</location>
        <topology evidence="1">Multi-pass membrane protein</topology>
    </subcellularLocation>
</comment>
<comment type="similarity">
    <text evidence="1">Belongs to the major facilitator superfamily. TsgA family.</text>
</comment>
<keyword id="KW-0997">Cell inner membrane</keyword>
<keyword id="KW-1003">Cell membrane</keyword>
<keyword id="KW-0472">Membrane</keyword>
<keyword id="KW-0812">Transmembrane</keyword>
<keyword id="KW-1133">Transmembrane helix</keyword>